<accession>A2Z3E5</accession>
<evidence type="ECO:0000250" key="1"/>
<evidence type="ECO:0000255" key="2"/>
<evidence type="ECO:0000305" key="3"/>
<comment type="function">
    <text evidence="1">Involved in the disassembling mechanism of the intact light-harvesting complex of photosystem II (LHCPII) in the thylakoid membranes. Required to trigger chlorophyll degradation during natural and dark-induced leaf senescence (By similarity).</text>
</comment>
<comment type="subcellular location">
    <subcellularLocation>
        <location evidence="3">Plastid</location>
        <location evidence="3">Chloroplast</location>
    </subcellularLocation>
</comment>
<comment type="similarity">
    <text evidence="3">Belongs to the staygreen family.</text>
</comment>
<reference key="1">
    <citation type="journal article" date="2005" name="PLoS Biol.">
        <title>The genomes of Oryza sativa: a history of duplications.</title>
        <authorList>
            <person name="Yu J."/>
            <person name="Wang J."/>
            <person name="Lin W."/>
            <person name="Li S."/>
            <person name="Li H."/>
            <person name="Zhou J."/>
            <person name="Ni P."/>
            <person name="Dong W."/>
            <person name="Hu S."/>
            <person name="Zeng C."/>
            <person name="Zhang J."/>
            <person name="Zhang Y."/>
            <person name="Li R."/>
            <person name="Xu Z."/>
            <person name="Li S."/>
            <person name="Li X."/>
            <person name="Zheng H."/>
            <person name="Cong L."/>
            <person name="Lin L."/>
            <person name="Yin J."/>
            <person name="Geng J."/>
            <person name="Li G."/>
            <person name="Shi J."/>
            <person name="Liu J."/>
            <person name="Lv H."/>
            <person name="Li J."/>
            <person name="Wang J."/>
            <person name="Deng Y."/>
            <person name="Ran L."/>
            <person name="Shi X."/>
            <person name="Wang X."/>
            <person name="Wu Q."/>
            <person name="Li C."/>
            <person name="Ren X."/>
            <person name="Wang J."/>
            <person name="Wang X."/>
            <person name="Li D."/>
            <person name="Liu D."/>
            <person name="Zhang X."/>
            <person name="Ji Z."/>
            <person name="Zhao W."/>
            <person name="Sun Y."/>
            <person name="Zhang Z."/>
            <person name="Bao J."/>
            <person name="Han Y."/>
            <person name="Dong L."/>
            <person name="Ji J."/>
            <person name="Chen P."/>
            <person name="Wu S."/>
            <person name="Liu J."/>
            <person name="Xiao Y."/>
            <person name="Bu D."/>
            <person name="Tan J."/>
            <person name="Yang L."/>
            <person name="Ye C."/>
            <person name="Zhang J."/>
            <person name="Xu J."/>
            <person name="Zhou Y."/>
            <person name="Yu Y."/>
            <person name="Zhang B."/>
            <person name="Zhuang S."/>
            <person name="Wei H."/>
            <person name="Liu B."/>
            <person name="Lei M."/>
            <person name="Yu H."/>
            <person name="Li Y."/>
            <person name="Xu H."/>
            <person name="Wei S."/>
            <person name="He X."/>
            <person name="Fang L."/>
            <person name="Zhang Z."/>
            <person name="Zhang Y."/>
            <person name="Huang X."/>
            <person name="Su Z."/>
            <person name="Tong W."/>
            <person name="Li J."/>
            <person name="Tong Z."/>
            <person name="Li S."/>
            <person name="Ye J."/>
            <person name="Wang L."/>
            <person name="Fang L."/>
            <person name="Lei T."/>
            <person name="Chen C.-S."/>
            <person name="Chen H.-C."/>
            <person name="Xu Z."/>
            <person name="Li H."/>
            <person name="Huang H."/>
            <person name="Zhang F."/>
            <person name="Xu H."/>
            <person name="Li N."/>
            <person name="Zhao C."/>
            <person name="Li S."/>
            <person name="Dong L."/>
            <person name="Huang Y."/>
            <person name="Li L."/>
            <person name="Xi Y."/>
            <person name="Qi Q."/>
            <person name="Li W."/>
            <person name="Zhang B."/>
            <person name="Hu W."/>
            <person name="Zhang Y."/>
            <person name="Tian X."/>
            <person name="Jiao Y."/>
            <person name="Liang X."/>
            <person name="Jin J."/>
            <person name="Gao L."/>
            <person name="Zheng W."/>
            <person name="Hao B."/>
            <person name="Liu S.-M."/>
            <person name="Wang W."/>
            <person name="Yuan L."/>
            <person name="Cao M."/>
            <person name="McDermott J."/>
            <person name="Samudrala R."/>
            <person name="Wang J."/>
            <person name="Wong G.K.-S."/>
            <person name="Yang H."/>
        </authorList>
    </citation>
    <scope>NUCLEOTIDE SEQUENCE [LARGE SCALE GENOMIC DNA]</scope>
    <source>
        <strain>cv. 93-11</strain>
    </source>
</reference>
<feature type="transit peptide" description="Chloroplast" evidence="2">
    <location>
        <begin position="1"/>
        <end position="48"/>
    </location>
</feature>
<feature type="chain" id="PRO_0000425237" description="Protein STAY-GREEN, chloroplastic">
    <location>
        <begin position="49"/>
        <end position="274"/>
    </location>
</feature>
<organism>
    <name type="scientific">Oryza sativa subsp. indica</name>
    <name type="common">Rice</name>
    <dbReference type="NCBI Taxonomy" id="39946"/>
    <lineage>
        <taxon>Eukaryota</taxon>
        <taxon>Viridiplantae</taxon>
        <taxon>Streptophyta</taxon>
        <taxon>Embryophyta</taxon>
        <taxon>Tracheophyta</taxon>
        <taxon>Spermatophyta</taxon>
        <taxon>Magnoliopsida</taxon>
        <taxon>Liliopsida</taxon>
        <taxon>Poales</taxon>
        <taxon>Poaceae</taxon>
        <taxon>BOP clade</taxon>
        <taxon>Oryzoideae</taxon>
        <taxon>Oryzeae</taxon>
        <taxon>Oryzinae</taxon>
        <taxon>Oryza</taxon>
        <taxon>Oryza sativa</taxon>
    </lineage>
</organism>
<protein>
    <recommendedName>
        <fullName>Protein STAY-GREEN, chloroplastic</fullName>
    </recommendedName>
    <alternativeName>
        <fullName>Protein STAYGREEN</fullName>
    </alternativeName>
</protein>
<sequence>MAAATSTMSLIPPITQQQRWHAADSLVVLASRRHDSRRRRRCRYVVPRARLFGPAIFEASKLKVLFLGVDEEKHQHPGKLPRTYTLTHSDVTARLTLAVSHTINRAQLQGWYNKLQRDEVVAEWKKVQGHMSLHVHCHISGGHVLLDLIAGLRYYIFRKELPVVLKAFVHGDGNLFSRHPELEEATVWVYFHSNLPRFNRVECWGPLRDAGAPPEEDDAVAAAAAEEVAAEQMPAAGEWPRRCPGQCDCCFPPYSLIPWPHQHDVAAADGQPQQ</sequence>
<gene>
    <name type="primary">SGR</name>
    <name type="ORF">OsI_32148</name>
</gene>
<dbReference type="EMBL" id="CM000134">
    <property type="protein sequence ID" value="EAZ09856.1"/>
    <property type="molecule type" value="Genomic_DNA"/>
</dbReference>
<dbReference type="SMR" id="A2Z3E5"/>
<dbReference type="STRING" id="39946.A2Z3E5"/>
<dbReference type="EnsemblPlants" id="BGIOSGA029383-TA">
    <property type="protein sequence ID" value="BGIOSGA029383-PA"/>
    <property type="gene ID" value="BGIOSGA029383"/>
</dbReference>
<dbReference type="EnsemblPlants" id="OsIR64_09g0017550.01">
    <property type="protein sequence ID" value="OsIR64_09g0017550.01"/>
    <property type="gene ID" value="OsIR64_09g0017550"/>
</dbReference>
<dbReference type="EnsemblPlants" id="OsKYG_09g0017380.01">
    <property type="protein sequence ID" value="OsKYG_09g0017380.01"/>
    <property type="gene ID" value="OsKYG_09g0017380"/>
</dbReference>
<dbReference type="EnsemblPlants" id="OsLaMu_09g0017470.01">
    <property type="protein sequence ID" value="OsLaMu_09g0017470.01"/>
    <property type="gene ID" value="OsLaMu_09g0017470"/>
</dbReference>
<dbReference type="EnsemblPlants" id="OsMH63_09G017910_01">
    <property type="protein sequence ID" value="OsMH63_09G017910_01"/>
    <property type="gene ID" value="OsMH63_09G017910"/>
</dbReference>
<dbReference type="EnsemblPlants" id="OsPr106_09g0017710.01">
    <property type="protein sequence ID" value="OsPr106_09g0017710.01"/>
    <property type="gene ID" value="OsPr106_09g0017710"/>
</dbReference>
<dbReference type="EnsemblPlants" id="OsZS97_09G017570_01">
    <property type="protein sequence ID" value="OsZS97_09G017570_01"/>
    <property type="gene ID" value="OsZS97_09G017570"/>
</dbReference>
<dbReference type="Gramene" id="BGIOSGA029383-TA">
    <property type="protein sequence ID" value="BGIOSGA029383-PA"/>
    <property type="gene ID" value="BGIOSGA029383"/>
</dbReference>
<dbReference type="Gramene" id="OsIR64_09g0017550.01">
    <property type="protein sequence ID" value="OsIR64_09g0017550.01"/>
    <property type="gene ID" value="OsIR64_09g0017550"/>
</dbReference>
<dbReference type="Gramene" id="OsKYG_09g0017380.01">
    <property type="protein sequence ID" value="OsKYG_09g0017380.01"/>
    <property type="gene ID" value="OsKYG_09g0017380"/>
</dbReference>
<dbReference type="Gramene" id="OsLaMu_09g0017470.01">
    <property type="protein sequence ID" value="OsLaMu_09g0017470.01"/>
    <property type="gene ID" value="OsLaMu_09g0017470"/>
</dbReference>
<dbReference type="Gramene" id="OsMH63_09G017910_01">
    <property type="protein sequence ID" value="OsMH63_09G017910_01"/>
    <property type="gene ID" value="OsMH63_09G017910"/>
</dbReference>
<dbReference type="Gramene" id="OsPr106_09g0017710.01">
    <property type="protein sequence ID" value="OsPr106_09g0017710.01"/>
    <property type="gene ID" value="OsPr106_09g0017710"/>
</dbReference>
<dbReference type="Gramene" id="OsZS97_09G017570_01">
    <property type="protein sequence ID" value="OsZS97_09G017570_01"/>
    <property type="gene ID" value="OsZS97_09G017570"/>
</dbReference>
<dbReference type="HOGENOM" id="CLU_073517_0_0_1"/>
<dbReference type="OMA" id="VGEWPHR"/>
<dbReference type="Proteomes" id="UP000007015">
    <property type="component" value="Chromosome 9"/>
</dbReference>
<dbReference type="GO" id="GO:0009507">
    <property type="term" value="C:chloroplast"/>
    <property type="evidence" value="ECO:0007669"/>
    <property type="project" value="UniProtKB-SubCell"/>
</dbReference>
<dbReference type="GO" id="GO:0015996">
    <property type="term" value="P:chlorophyll catabolic process"/>
    <property type="evidence" value="ECO:0007669"/>
    <property type="project" value="TreeGrafter"/>
</dbReference>
<dbReference type="InterPro" id="IPR024438">
    <property type="entry name" value="Staygreen"/>
</dbReference>
<dbReference type="PANTHER" id="PTHR31750:SF4">
    <property type="entry name" value="LP06106P"/>
    <property type="match status" value="1"/>
</dbReference>
<dbReference type="PANTHER" id="PTHR31750">
    <property type="entry name" value="PROTEIN STAY-GREEN 1, CHLOROPLASTIC-RELATED"/>
    <property type="match status" value="1"/>
</dbReference>
<dbReference type="Pfam" id="PF12638">
    <property type="entry name" value="Staygreen"/>
    <property type="match status" value="1"/>
</dbReference>
<keyword id="KW-0150">Chloroplast</keyword>
<keyword id="KW-0934">Plastid</keyword>
<keyword id="KW-1185">Reference proteome</keyword>
<keyword id="KW-0809">Transit peptide</keyword>
<proteinExistence type="inferred from homology"/>
<name>SGR_ORYSI</name>